<evidence type="ECO:0000250" key="1"/>
<evidence type="ECO:0000255" key="2"/>
<evidence type="ECO:0000255" key="3">
    <source>
        <dbReference type="PROSITE-ProRule" id="PRU00140"/>
    </source>
</evidence>
<evidence type="ECO:0000256" key="4">
    <source>
        <dbReference type="SAM" id="MobiDB-lite"/>
    </source>
</evidence>
<accession>P12349</accession>
<comment type="function">
    <text evidence="1">Essential for biological clock functions. Determines the period length of circadian and ultradian rhythms; an increase in PER dosage leads to shortened circadian rhythms and a decrease leads to lengthened circadian rhythms. Essential for the circadian rhythmicity of locomotor activity, eclosion behavior, and for the rhythmic component of the male courtship song that originates in the thoracic nervous system. The biological cycle depends on the rhythmic formation and nuclear localization of the TIM-PER complex. Light induces the degradation of TIM, which promotes elimination of PER. Nuclear activity of the heterodimer coordinatively regulates PER and TIM transcription through a negative feedback loop. Behaves as a negative element in circadian transcriptional loop. Does not appear to bind DNA, suggesting indirect transcriptional inhibition (By similarity).</text>
</comment>
<comment type="subunit">
    <text evidence="1">Forms a heterodimer with timeless (TIM); the complex then translocates into the nucleus.</text>
</comment>
<comment type="subcellular location">
    <subcellularLocation>
        <location evidence="1">Nucleus</location>
    </subcellularLocation>
    <subcellularLocation>
        <location evidence="1">Cytoplasm</location>
        <location evidence="1">Perinuclear region</location>
    </subcellularLocation>
    <text evidence="1">Nuclear at specific periods of the day. First accumulates in the perinuclear region about one hour before translocation into the nucleus. Interaction with Tim is required for nuclear localization (By similarity).</text>
</comment>
<comment type="PTM">
    <text evidence="1">Phosphorylated with a circadian rhythmicity, probably by the double-time protein (dbt). Phosphorylation could be implicated in the stability of per monomer and in the formation of heterodimer per-tim (By similarity).</text>
</comment>
<protein>
    <recommendedName>
        <fullName>Period circadian protein</fullName>
    </recommendedName>
</protein>
<keyword id="KW-0090">Biological rhythms</keyword>
<keyword id="KW-0963">Cytoplasm</keyword>
<keyword id="KW-0539">Nucleus</keyword>
<keyword id="KW-0597">Phosphoprotein</keyword>
<keyword id="KW-0677">Repeat</keyword>
<name>PER_DROVI</name>
<proteinExistence type="inferred from homology"/>
<dbReference type="EMBL" id="X13877">
    <property type="protein sequence ID" value="CAA32081.1"/>
    <property type="molecule type" value="Genomic_DNA"/>
</dbReference>
<dbReference type="PIR" id="S02035">
    <property type="entry name" value="S02035"/>
</dbReference>
<dbReference type="SMR" id="P12349"/>
<dbReference type="eggNOG" id="KOG3753">
    <property type="taxonomic scope" value="Eukaryota"/>
</dbReference>
<dbReference type="OrthoDB" id="7788983at2759"/>
<dbReference type="GO" id="GO:0005634">
    <property type="term" value="C:nucleus"/>
    <property type="evidence" value="ECO:0007669"/>
    <property type="project" value="UniProtKB-SubCell"/>
</dbReference>
<dbReference type="GO" id="GO:0048471">
    <property type="term" value="C:perinuclear region of cytoplasm"/>
    <property type="evidence" value="ECO:0007669"/>
    <property type="project" value="UniProtKB-SubCell"/>
</dbReference>
<dbReference type="GO" id="GO:0000976">
    <property type="term" value="F:transcription cis-regulatory region binding"/>
    <property type="evidence" value="ECO:0007669"/>
    <property type="project" value="TreeGrafter"/>
</dbReference>
<dbReference type="GO" id="GO:0001222">
    <property type="term" value="F:transcription corepressor binding"/>
    <property type="evidence" value="ECO:0007669"/>
    <property type="project" value="TreeGrafter"/>
</dbReference>
<dbReference type="GO" id="GO:0032922">
    <property type="term" value="P:circadian regulation of gene expression"/>
    <property type="evidence" value="ECO:0007669"/>
    <property type="project" value="TreeGrafter"/>
</dbReference>
<dbReference type="GO" id="GO:0043153">
    <property type="term" value="P:entrainment of circadian clock by photoperiod"/>
    <property type="evidence" value="ECO:0007669"/>
    <property type="project" value="TreeGrafter"/>
</dbReference>
<dbReference type="GO" id="GO:0000122">
    <property type="term" value="P:negative regulation of transcription by RNA polymerase II"/>
    <property type="evidence" value="ECO:0007669"/>
    <property type="project" value="TreeGrafter"/>
</dbReference>
<dbReference type="CDD" id="cd00130">
    <property type="entry name" value="PAS"/>
    <property type="match status" value="2"/>
</dbReference>
<dbReference type="FunFam" id="1.20.5.770:FF:000001">
    <property type="entry name" value="Period circadian protein"/>
    <property type="match status" value="1"/>
</dbReference>
<dbReference type="FunFam" id="3.30.450.20:FF:000066">
    <property type="entry name" value="Period circadian protein"/>
    <property type="match status" value="1"/>
</dbReference>
<dbReference type="FunFam" id="3.30.450.20:FF:000072">
    <property type="entry name" value="Period circadian protein"/>
    <property type="match status" value="1"/>
</dbReference>
<dbReference type="Gene3D" id="3.30.450.20">
    <property type="entry name" value="PAS domain"/>
    <property type="match status" value="2"/>
</dbReference>
<dbReference type="Gene3D" id="1.20.5.770">
    <property type="entry name" value="Single helix bin"/>
    <property type="match status" value="1"/>
</dbReference>
<dbReference type="InterPro" id="IPR000014">
    <property type="entry name" value="PAS"/>
</dbReference>
<dbReference type="InterPro" id="IPR035965">
    <property type="entry name" value="PAS-like_dom_sf"/>
</dbReference>
<dbReference type="InterPro" id="IPR013767">
    <property type="entry name" value="PAS_fold"/>
</dbReference>
<dbReference type="InterPro" id="IPR050760">
    <property type="entry name" value="Period_circadian_regulator"/>
</dbReference>
<dbReference type="PANTHER" id="PTHR11269">
    <property type="entry name" value="PERIOD CIRCADIAN PROTEIN"/>
    <property type="match status" value="1"/>
</dbReference>
<dbReference type="PANTHER" id="PTHR11269:SF16">
    <property type="entry name" value="PERIOD CIRCADIAN PROTEIN"/>
    <property type="match status" value="1"/>
</dbReference>
<dbReference type="Pfam" id="PF00989">
    <property type="entry name" value="PAS"/>
    <property type="match status" value="1"/>
</dbReference>
<dbReference type="Pfam" id="PF14598">
    <property type="entry name" value="PAS_11"/>
    <property type="match status" value="1"/>
</dbReference>
<dbReference type="SMART" id="SM00091">
    <property type="entry name" value="PAS"/>
    <property type="match status" value="2"/>
</dbReference>
<dbReference type="SUPFAM" id="SSF55785">
    <property type="entry name" value="PYP-like sensor domain (PAS domain)"/>
    <property type="match status" value="2"/>
</dbReference>
<dbReference type="PROSITE" id="PS50112">
    <property type="entry name" value="PAS"/>
    <property type="match status" value="2"/>
</dbReference>
<gene>
    <name type="primary">per</name>
</gene>
<reference key="1">
    <citation type="journal article" date="1988" name="EMBO J.">
        <title>Interspecific comparison of the period gene of Drosophila reveals large blocks of non-conserved coding DNA.</title>
        <authorList>
            <person name="Colot H.V."/>
            <person name="Hall J.C."/>
            <person name="Rosbash M."/>
        </authorList>
    </citation>
    <scope>NUCLEOTIDE SEQUENCE [GENOMIC DNA]</scope>
</reference>
<organism>
    <name type="scientific">Drosophila virilis</name>
    <name type="common">Fruit fly</name>
    <dbReference type="NCBI Taxonomy" id="7244"/>
    <lineage>
        <taxon>Eukaryota</taxon>
        <taxon>Metazoa</taxon>
        <taxon>Ecdysozoa</taxon>
        <taxon>Arthropoda</taxon>
        <taxon>Hexapoda</taxon>
        <taxon>Insecta</taxon>
        <taxon>Pterygota</taxon>
        <taxon>Neoptera</taxon>
        <taxon>Endopterygota</taxon>
        <taxon>Diptera</taxon>
        <taxon>Brachycera</taxon>
        <taxon>Muscomorpha</taxon>
        <taxon>Ephydroidea</taxon>
        <taxon>Drosophilidae</taxon>
        <taxon>Drosophila</taxon>
    </lineage>
</organism>
<sequence length="1087" mass="118081">MEGESTESTHNTKVSDSAYSNSCSNSQSQRSGSSKSRLSGSHSSGSSGYGGKPSTQASSSDMAVKRNKDKSRKKKKAKSPAQATAATTTTIKSLEQTEEPLLVKPNNGSCEQQLELQDAQQLGAPTPSDAHDAHGDKPQLDVDEQQDDPQAEQIQQLETATAATISPDTMSASVTVTIDGCTSMEKTCEWTDRPGRLEAHAACIGKQHVQQQQHDRVKEDSFCCVISMHDGVVLFTTANLNEMLGYPREMWLGRSFIDFVHIKDRATFASQITTGIPIAESRCSQSKDARTTFCVMLRRYRGLASGGFGIIGRPVSYAPFRLGLTFREAPEEVQPDGCTLSNATSMLLVISATPIKSCYKEPDEFLSPKGPKFAIQHTAAGIISHVDTAAVSALGYLPQDLIGRSILDFYHHEDLSDIKDIYEKVVKKGQTVGATFCSKPFRFLIQNGCYILLETEWTSFVNPWSRKLEFVVGHHRVFQGPKQCDVFEMSPNVTPNIPEDEQNRNACIKEDILKMMTETVTRPSDTVKQEVSRRCQALASFMETLMDEVARGDLKLDLPHETELTVSERDSVMLGEISPHHDYYDSKSSTETPPSYNQLNYNENLLRFFNSKPVTAPVDTDPPKMDSSYVSSAREDALSPVHGFEGSGGSGSSGNLTTASNVRMSSVTNTSNTGTGTSGGENSASGSSNPLPVNMTLTEILLNKHNDEMEKCMLKKHRESRGRTGDKTKKSVIEKMPEYSGPGHGQTMKRGGSHSWEGDANKPKQQLTLSAVVVAPTVSVSPAEDSQTTAKWQAPMTGSHLFQSSYNFPQSINLWPPFSLGLTTPTVHTTHTSMAQKSFSPQHNLFPAFYYIPAPLATATAGSAAAQTSVSSASAAQHSPKSSENPSTSQPEATAATAMPMPYMAGVMYPHPSLFYAYQPMPFPSVSGAVQMSVQSSGSQSNNNNKSIYTMAPASTTTQKPGAFHSITPAELNKPDAPDTLLHTETSPKISVQEAPKKELSDLPSTSARRGSSSDQRNNSNNPKKYTDSNGNSDDMDGSSFSSFYSSFIKTTDGSESPPDNEKETKVHKLKPIVEHPEEDQTQHGDG</sequence>
<feature type="chain" id="PRO_0000162613" description="Period circadian protein">
    <location>
        <begin position="1"/>
        <end position="1087"/>
    </location>
</feature>
<feature type="domain" description="PAS 1" evidence="3">
    <location>
        <begin position="220"/>
        <end position="355"/>
    </location>
</feature>
<feature type="domain" description="PAS 2" evidence="3">
    <location>
        <begin position="373"/>
        <end position="479"/>
    </location>
</feature>
<feature type="region of interest" description="Disordered" evidence="4">
    <location>
        <begin position="1"/>
        <end position="98"/>
    </location>
</feature>
<feature type="region of interest" description="Disordered" evidence="4">
    <location>
        <begin position="123"/>
        <end position="153"/>
    </location>
</feature>
<feature type="region of interest" description="Disordered" evidence="4">
    <location>
        <begin position="613"/>
        <end position="692"/>
    </location>
</feature>
<feature type="region of interest" description="Disordered" evidence="4">
    <location>
        <begin position="736"/>
        <end position="759"/>
    </location>
</feature>
<feature type="region of interest" description="Disordered" evidence="4">
    <location>
        <begin position="871"/>
        <end position="893"/>
    </location>
</feature>
<feature type="region of interest" description="Disordered" evidence="4">
    <location>
        <begin position="956"/>
        <end position="1087"/>
    </location>
</feature>
<feature type="short sequence motif" description="Nuclear localization signal" evidence="2">
    <location>
        <begin position="65"/>
        <end position="78"/>
    </location>
</feature>
<feature type="compositionally biased region" description="Polar residues" evidence="4">
    <location>
        <begin position="1"/>
        <end position="14"/>
    </location>
</feature>
<feature type="compositionally biased region" description="Low complexity" evidence="4">
    <location>
        <begin position="15"/>
        <end position="46"/>
    </location>
</feature>
<feature type="compositionally biased region" description="Basic residues" evidence="4">
    <location>
        <begin position="65"/>
        <end position="78"/>
    </location>
</feature>
<feature type="compositionally biased region" description="Low complexity" evidence="4">
    <location>
        <begin position="79"/>
        <end position="93"/>
    </location>
</feature>
<feature type="compositionally biased region" description="Basic and acidic residues" evidence="4">
    <location>
        <begin position="129"/>
        <end position="140"/>
    </location>
</feature>
<feature type="compositionally biased region" description="Acidic residues" evidence="4">
    <location>
        <begin position="141"/>
        <end position="150"/>
    </location>
</feature>
<feature type="compositionally biased region" description="Polar residues" evidence="4">
    <location>
        <begin position="655"/>
        <end position="664"/>
    </location>
</feature>
<feature type="compositionally biased region" description="Low complexity" evidence="4">
    <location>
        <begin position="665"/>
        <end position="689"/>
    </location>
</feature>
<feature type="compositionally biased region" description="Polar residues" evidence="4">
    <location>
        <begin position="877"/>
        <end position="892"/>
    </location>
</feature>
<feature type="compositionally biased region" description="Polar residues" evidence="4">
    <location>
        <begin position="1003"/>
        <end position="1024"/>
    </location>
</feature>
<feature type="compositionally biased region" description="Low complexity" evidence="4">
    <location>
        <begin position="1028"/>
        <end position="1047"/>
    </location>
</feature>
<feature type="compositionally biased region" description="Basic and acidic residues" evidence="4">
    <location>
        <begin position="1060"/>
        <end position="1087"/>
    </location>
</feature>